<name>RL29_FRAT1</name>
<comment type="similarity">
    <text evidence="1">Belongs to the universal ribosomal protein uL29 family.</text>
</comment>
<sequence length="66" mass="7773">MKRKDTLKDYRGKSIDQLQEAKIELLQQLFSLRMQKGTGQLKKNHLFKSAKRDIARINTIISEKNK</sequence>
<dbReference type="EMBL" id="AM286280">
    <property type="protein sequence ID" value="CAL08349.1"/>
    <property type="molecule type" value="Genomic_DNA"/>
</dbReference>
<dbReference type="RefSeq" id="WP_003017801.1">
    <property type="nucleotide sequence ID" value="NC_008245.1"/>
</dbReference>
<dbReference type="SMR" id="Q14JB2"/>
<dbReference type="GeneID" id="75264253"/>
<dbReference type="KEGG" id="ftf:FTF0333"/>
<dbReference type="HOGENOM" id="CLU_158491_1_2_6"/>
<dbReference type="GO" id="GO:0022625">
    <property type="term" value="C:cytosolic large ribosomal subunit"/>
    <property type="evidence" value="ECO:0007669"/>
    <property type="project" value="TreeGrafter"/>
</dbReference>
<dbReference type="GO" id="GO:0003735">
    <property type="term" value="F:structural constituent of ribosome"/>
    <property type="evidence" value="ECO:0007669"/>
    <property type="project" value="InterPro"/>
</dbReference>
<dbReference type="GO" id="GO:0006412">
    <property type="term" value="P:translation"/>
    <property type="evidence" value="ECO:0007669"/>
    <property type="project" value="UniProtKB-UniRule"/>
</dbReference>
<dbReference type="CDD" id="cd00427">
    <property type="entry name" value="Ribosomal_L29_HIP"/>
    <property type="match status" value="1"/>
</dbReference>
<dbReference type="Gene3D" id="6.10.140.1970">
    <property type="match status" value="1"/>
</dbReference>
<dbReference type="HAMAP" id="MF_00374">
    <property type="entry name" value="Ribosomal_uL29"/>
    <property type="match status" value="1"/>
</dbReference>
<dbReference type="InterPro" id="IPR050063">
    <property type="entry name" value="Ribosomal_protein_uL29"/>
</dbReference>
<dbReference type="InterPro" id="IPR001854">
    <property type="entry name" value="Ribosomal_uL29"/>
</dbReference>
<dbReference type="InterPro" id="IPR018254">
    <property type="entry name" value="Ribosomal_uL29_CS"/>
</dbReference>
<dbReference type="InterPro" id="IPR036049">
    <property type="entry name" value="Ribosomal_uL29_sf"/>
</dbReference>
<dbReference type="NCBIfam" id="TIGR00012">
    <property type="entry name" value="L29"/>
    <property type="match status" value="1"/>
</dbReference>
<dbReference type="PANTHER" id="PTHR10916">
    <property type="entry name" value="60S RIBOSOMAL PROTEIN L35/50S RIBOSOMAL PROTEIN L29"/>
    <property type="match status" value="1"/>
</dbReference>
<dbReference type="PANTHER" id="PTHR10916:SF0">
    <property type="entry name" value="LARGE RIBOSOMAL SUBUNIT PROTEIN UL29C"/>
    <property type="match status" value="1"/>
</dbReference>
<dbReference type="Pfam" id="PF00831">
    <property type="entry name" value="Ribosomal_L29"/>
    <property type="match status" value="1"/>
</dbReference>
<dbReference type="SUPFAM" id="SSF46561">
    <property type="entry name" value="Ribosomal protein L29 (L29p)"/>
    <property type="match status" value="1"/>
</dbReference>
<dbReference type="PROSITE" id="PS00579">
    <property type="entry name" value="RIBOSOMAL_L29"/>
    <property type="match status" value="1"/>
</dbReference>
<feature type="chain" id="PRO_1000007484" description="Large ribosomal subunit protein uL29">
    <location>
        <begin position="1"/>
        <end position="66"/>
    </location>
</feature>
<proteinExistence type="inferred from homology"/>
<reference key="1">
    <citation type="journal article" date="2007" name="PLoS ONE">
        <title>Genome sequencing shows that European isolates of Francisella tularensis subspecies tularensis are almost identical to US laboratory strain Schu S4.</title>
        <authorList>
            <person name="Chaudhuri R.R."/>
            <person name="Ren C.-P."/>
            <person name="Desmond L."/>
            <person name="Vincent G.A."/>
            <person name="Silman N.J."/>
            <person name="Brehm J.K."/>
            <person name="Elmore M.J."/>
            <person name="Hudson M.J."/>
            <person name="Forsman M."/>
            <person name="Isherwood K.E."/>
            <person name="Gurycova D."/>
            <person name="Minton N.P."/>
            <person name="Titball R.W."/>
            <person name="Pallen M.J."/>
            <person name="Vipond R."/>
        </authorList>
    </citation>
    <scope>NUCLEOTIDE SEQUENCE [LARGE SCALE GENOMIC DNA]</scope>
    <source>
        <strain>FSC 198</strain>
    </source>
</reference>
<evidence type="ECO:0000255" key="1">
    <source>
        <dbReference type="HAMAP-Rule" id="MF_00374"/>
    </source>
</evidence>
<evidence type="ECO:0000305" key="2"/>
<keyword id="KW-0687">Ribonucleoprotein</keyword>
<keyword id="KW-0689">Ribosomal protein</keyword>
<organism>
    <name type="scientific">Francisella tularensis subsp. tularensis (strain FSC 198)</name>
    <dbReference type="NCBI Taxonomy" id="393115"/>
    <lineage>
        <taxon>Bacteria</taxon>
        <taxon>Pseudomonadati</taxon>
        <taxon>Pseudomonadota</taxon>
        <taxon>Gammaproteobacteria</taxon>
        <taxon>Thiotrichales</taxon>
        <taxon>Francisellaceae</taxon>
        <taxon>Francisella</taxon>
    </lineage>
</organism>
<protein>
    <recommendedName>
        <fullName evidence="1">Large ribosomal subunit protein uL29</fullName>
    </recommendedName>
    <alternativeName>
        <fullName evidence="2">50S ribosomal protein L29</fullName>
    </alternativeName>
</protein>
<gene>
    <name evidence="1" type="primary">rpmC</name>
    <name type="ordered locus">FTF0333</name>
</gene>
<accession>Q14JB2</accession>